<accession>Q8YWE0</accession>
<dbReference type="EMBL" id="BA000019">
    <property type="protein sequence ID" value="BAB78039.1"/>
    <property type="molecule type" value="Genomic_DNA"/>
</dbReference>
<dbReference type="PIR" id="AC2015">
    <property type="entry name" value="AC2015"/>
</dbReference>
<dbReference type="RefSeq" id="WP_010995842.1">
    <property type="nucleotide sequence ID" value="NZ_RSCN01000013.1"/>
</dbReference>
<dbReference type="SMR" id="Q8YWE0"/>
<dbReference type="STRING" id="103690.gene:10493690"/>
<dbReference type="KEGG" id="ana:all1673"/>
<dbReference type="eggNOG" id="ENOG502Z8DN">
    <property type="taxonomic scope" value="Bacteria"/>
</dbReference>
<dbReference type="OrthoDB" id="418298at2"/>
<dbReference type="Proteomes" id="UP000002483">
    <property type="component" value="Chromosome"/>
</dbReference>
<dbReference type="GO" id="GO:0005886">
    <property type="term" value="C:plasma membrane"/>
    <property type="evidence" value="ECO:0007669"/>
    <property type="project" value="UniProtKB-SubCell"/>
</dbReference>
<dbReference type="GO" id="GO:0015078">
    <property type="term" value="F:proton transmembrane transporter activity"/>
    <property type="evidence" value="ECO:0007669"/>
    <property type="project" value="UniProtKB-UniRule"/>
</dbReference>
<dbReference type="HAMAP" id="MF_01308">
    <property type="entry name" value="CemA_PxcA"/>
    <property type="match status" value="1"/>
</dbReference>
<dbReference type="InterPro" id="IPR004282">
    <property type="entry name" value="CemA"/>
</dbReference>
<dbReference type="NCBIfam" id="NF002703">
    <property type="entry name" value="PRK02507.1-1"/>
    <property type="match status" value="1"/>
</dbReference>
<dbReference type="PANTHER" id="PTHR33650:SF2">
    <property type="entry name" value="CHLOROPLAST ENVELOPE MEMBRANE PROTEIN"/>
    <property type="match status" value="1"/>
</dbReference>
<dbReference type="PANTHER" id="PTHR33650">
    <property type="entry name" value="CHLOROPLAST ENVELOPE MEMBRANE PROTEIN-RELATED"/>
    <property type="match status" value="1"/>
</dbReference>
<dbReference type="Pfam" id="PF03040">
    <property type="entry name" value="CemA"/>
    <property type="match status" value="1"/>
</dbReference>
<reference key="1">
    <citation type="journal article" date="2001" name="DNA Res.">
        <title>Complete genomic sequence of the filamentous nitrogen-fixing cyanobacterium Anabaena sp. strain PCC 7120.</title>
        <authorList>
            <person name="Kaneko T."/>
            <person name="Nakamura Y."/>
            <person name="Wolk C.P."/>
            <person name="Kuritz T."/>
            <person name="Sasamoto S."/>
            <person name="Watanabe A."/>
            <person name="Iriguchi M."/>
            <person name="Ishikawa A."/>
            <person name="Kawashima K."/>
            <person name="Kimura T."/>
            <person name="Kishida Y."/>
            <person name="Kohara M."/>
            <person name="Matsumoto M."/>
            <person name="Matsuno A."/>
            <person name="Muraki A."/>
            <person name="Nakazaki N."/>
            <person name="Shimpo S."/>
            <person name="Sugimoto M."/>
            <person name="Takazawa M."/>
            <person name="Yamada M."/>
            <person name="Yasuda M."/>
            <person name="Tabata S."/>
        </authorList>
    </citation>
    <scope>NUCLEOTIDE SEQUENCE [LARGE SCALE GENOMIC DNA]</scope>
    <source>
        <strain>PCC 7120 / SAG 25.82 / UTEX 2576</strain>
    </source>
</reference>
<sequence length="467" mass="53641">MPTMRNSIFSEKIYPILLSAYRWYLRTPERSLEEAYKAALNIKAIEDEHFNGNKIDFNSAIYSNSVMDYFESDLAQELKTARMRLTEFRFSRWFSNESHQKAARKAGIEYPSSNVTLEKLKFIDEVISKYIITDYEIVAPSGVSESQVRTTSSQPPENPSLTDALRTNDINKNNLVERIYTPTSPPQLIKQRTEQSKKSRGKADTTGILPRSILSTIGRLQIELDPNAEQDVINNFRQAQKRSIISIRFILLIIIVPLLTHQLSKALIVSPIFNHFKNDHTEQIFLNSEMEEEALSTLHRFEERIKFENLISNAPPLSAEAIETQIKEKAEELAAEFRGESSNAIKNVFADIFSVGAFIWLLLVSKPSIMVLKEFFDNVVYGLSDSAKAFIIILFTDVFVGFHSPHGWEVILEGLSRHWGLPANRDFIFLFIATFPVILDTIFKYWIFRYLNRISPSAVATYRNMNE</sequence>
<organism>
    <name type="scientific">Nostoc sp. (strain PCC 7120 / SAG 25.82 / UTEX 2576)</name>
    <dbReference type="NCBI Taxonomy" id="103690"/>
    <lineage>
        <taxon>Bacteria</taxon>
        <taxon>Bacillati</taxon>
        <taxon>Cyanobacteriota</taxon>
        <taxon>Cyanophyceae</taxon>
        <taxon>Nostocales</taxon>
        <taxon>Nostocaceae</taxon>
        <taxon>Nostoc</taxon>
    </lineage>
</organism>
<feature type="chain" id="PRO_0000216668" description="Proton extrusion protein PxcA">
    <location>
        <begin position="1"/>
        <end position="467"/>
    </location>
</feature>
<feature type="transmembrane region" description="Helical" evidence="1">
    <location>
        <begin position="249"/>
        <end position="269"/>
    </location>
</feature>
<feature type="transmembrane region" description="Helical" evidence="1">
    <location>
        <begin position="352"/>
        <end position="372"/>
    </location>
</feature>
<feature type="transmembrane region" description="Helical" evidence="1">
    <location>
        <begin position="391"/>
        <end position="411"/>
    </location>
</feature>
<feature type="transmembrane region" description="Helical" evidence="1">
    <location>
        <begin position="427"/>
        <end position="447"/>
    </location>
</feature>
<feature type="region of interest" description="Disordered" evidence="2">
    <location>
        <begin position="146"/>
        <end position="167"/>
    </location>
</feature>
<feature type="region of interest" description="Disordered" evidence="2">
    <location>
        <begin position="186"/>
        <end position="205"/>
    </location>
</feature>
<feature type="compositionally biased region" description="Polar residues" evidence="2">
    <location>
        <begin position="146"/>
        <end position="161"/>
    </location>
</feature>
<feature type="compositionally biased region" description="Basic and acidic residues" evidence="2">
    <location>
        <begin position="191"/>
        <end position="203"/>
    </location>
</feature>
<comment type="function">
    <text evidence="1">Required for H(+) efflux immediately after light irradiation to form a rapid H(+) concentration gradient across the thylakoid membranes. Together with PxcL, contributes to transient H(+) uptake following dark to light transition.</text>
</comment>
<comment type="subcellular location">
    <subcellularLocation>
        <location evidence="1">Cell inner membrane</location>
        <topology evidence="1">Multi-pass membrane protein</topology>
    </subcellularLocation>
</comment>
<comment type="similarity">
    <text evidence="1">Belongs to the CemA family.</text>
</comment>
<keyword id="KW-0997">Cell inner membrane</keyword>
<keyword id="KW-1003">Cell membrane</keyword>
<keyword id="KW-0375">Hydrogen ion transport</keyword>
<keyword id="KW-0406">Ion transport</keyword>
<keyword id="KW-0472">Membrane</keyword>
<keyword id="KW-1185">Reference proteome</keyword>
<keyword id="KW-0812">Transmembrane</keyword>
<keyword id="KW-1133">Transmembrane helix</keyword>
<keyword id="KW-0813">Transport</keyword>
<proteinExistence type="inferred from homology"/>
<gene>
    <name evidence="1" type="primary">pxcA</name>
    <name type="ordered locus">all1673</name>
</gene>
<name>PXCA_NOSS1</name>
<protein>
    <recommendedName>
        <fullName evidence="1">Proton extrusion protein PxcA</fullName>
    </recommendedName>
</protein>
<evidence type="ECO:0000255" key="1">
    <source>
        <dbReference type="HAMAP-Rule" id="MF_01308"/>
    </source>
</evidence>
<evidence type="ECO:0000256" key="2">
    <source>
        <dbReference type="SAM" id="MobiDB-lite"/>
    </source>
</evidence>